<gene>
    <name evidence="13" type="primary">SLC6A12</name>
    <name evidence="10" type="synonym">BGT1</name>
</gene>
<comment type="function">
    <text evidence="3 9">Transporter that mediates cellular uptake of betaine and GABA in a sodium- and chloride-dependent process (PubMed:7589472). May have a role in regulation of GABAergic transmission in the brain through the reuptake of GABA into presynaptic terminals, as well as in osmotic regulation. Probably also involved in renal and hepatic osmotic regulation (By similarity).</text>
</comment>
<comment type="catalytic activity">
    <reaction evidence="9">
        <text>4-aminobutanoate(out) + chloride(out) + 3 Na(+)(out) = 4-aminobutanoate(in) + chloride(in) + 3 Na(+)(in)</text>
        <dbReference type="Rhea" id="RHEA:70731"/>
        <dbReference type="ChEBI" id="CHEBI:17996"/>
        <dbReference type="ChEBI" id="CHEBI:29101"/>
        <dbReference type="ChEBI" id="CHEBI:59888"/>
    </reaction>
    <physiologicalReaction direction="left-to-right" evidence="12">
        <dbReference type="Rhea" id="RHEA:70732"/>
    </physiologicalReaction>
</comment>
<comment type="catalytic activity">
    <reaction evidence="2">
        <text>glycine betaine(out) + 2 chloride(out) + 3 Na(+)(out) = glycine betaine(in) + 2 chloride(in) + 3 Na(+)(in)</text>
        <dbReference type="Rhea" id="RHEA:71175"/>
        <dbReference type="ChEBI" id="CHEBI:17750"/>
        <dbReference type="ChEBI" id="CHEBI:17996"/>
        <dbReference type="ChEBI" id="CHEBI:29101"/>
    </reaction>
    <physiologicalReaction direction="left-to-right" evidence="2">
        <dbReference type="Rhea" id="RHEA:71176"/>
    </physiologicalReaction>
</comment>
<comment type="biophysicochemical properties">
    <kinetics>
        <KM evidence="9">20 uM for 4-aminobutanoate</KM>
    </kinetics>
</comment>
<comment type="subunit">
    <text evidence="1">Interacts with LIN7C.</text>
</comment>
<comment type="interaction">
    <interactant intactId="EBI-3843589">
        <id>P48065</id>
    </interactant>
    <interactant intactId="EBI-7797864">
        <id>P11912</id>
        <label>CD79A</label>
    </interactant>
    <organismsDiffer>false</organismsDiffer>
    <experiments>3</experiments>
</comment>
<comment type="interaction">
    <interactant intactId="EBI-3843589">
        <id>P48065</id>
    </interactant>
    <interactant intactId="EBI-307352">
        <id>Q04864</id>
        <label>REL</label>
    </interactant>
    <organismsDiffer>false</organismsDiffer>
    <experiments>3</experiments>
</comment>
<comment type="interaction">
    <interactant intactId="EBI-3843589">
        <id>P48065</id>
    </interactant>
    <interactant intactId="EBI-357345">
        <id>Q14160</id>
        <label>SCRIB</label>
    </interactant>
    <organismsDiffer>false</organismsDiffer>
    <experiments>2</experiments>
</comment>
<comment type="subcellular location">
    <subcellularLocation>
        <location evidence="3">Basolateral cell membrane</location>
        <topology evidence="5">Multi-pass membrane protein</topology>
    </subcellularLocation>
    <subcellularLocation>
        <location evidence="3">Cell membrane</location>
        <topology evidence="5">Multi-pass membrane protein</topology>
    </subcellularLocation>
    <text evidence="3">In kidney, locates in basolateral membranes of renal medulla. In liver, locates in hepatocytes cell membrane.</text>
</comment>
<comment type="tissue specificity">
    <text evidence="9">Expressed in kidney, liver, heart, skeletal muscle, placenta, and a widespread distribution in the brain.</text>
</comment>
<comment type="similarity">
    <text evidence="11">Belongs to the sodium:neurotransmitter symporter (SNF) (TC 2.A.22) family. SLC6A12 subfamily.</text>
</comment>
<proteinExistence type="evidence at protein level"/>
<feature type="chain" id="PRO_0000214788" description="Sodium- and chloride-dependent betaine transporter">
    <location>
        <begin position="1"/>
        <end position="614"/>
    </location>
</feature>
<feature type="topological domain" description="Cytoplasmic" evidence="5">
    <location>
        <begin position="1"/>
        <end position="44"/>
    </location>
</feature>
<feature type="transmembrane region" description="Helical; Name=1" evidence="5">
    <location>
        <begin position="45"/>
        <end position="65"/>
    </location>
</feature>
<feature type="transmembrane region" description="Helical; Name=2" evidence="5">
    <location>
        <begin position="73"/>
        <end position="92"/>
    </location>
</feature>
<feature type="transmembrane region" description="Helical; Name=3" evidence="5">
    <location>
        <begin position="117"/>
        <end position="137"/>
    </location>
</feature>
<feature type="topological domain" description="Extracellular" evidence="5">
    <location>
        <begin position="138"/>
        <end position="210"/>
    </location>
</feature>
<feature type="transmembrane region" description="Helical; Name=4" evidence="5">
    <location>
        <begin position="211"/>
        <end position="229"/>
    </location>
</feature>
<feature type="transmembrane region" description="Helical; Name=5" evidence="5">
    <location>
        <begin position="238"/>
        <end position="255"/>
    </location>
</feature>
<feature type="transmembrane region" description="Helical; Name=6" evidence="5">
    <location>
        <begin position="291"/>
        <end position="308"/>
    </location>
</feature>
<feature type="transmembrane region" description="Helical; Name=7" evidence="5">
    <location>
        <begin position="320"/>
        <end position="341"/>
    </location>
</feature>
<feature type="transmembrane region" description="Helical; Name=8" evidence="5">
    <location>
        <begin position="374"/>
        <end position="393"/>
    </location>
</feature>
<feature type="transmembrane region" description="Helical; Name=9" evidence="5">
    <location>
        <begin position="423"/>
        <end position="441"/>
    </location>
</feature>
<feature type="transmembrane region" description="Helical; Name=10" evidence="5">
    <location>
        <begin position="458"/>
        <end position="478"/>
    </location>
</feature>
<feature type="transmembrane region" description="Helical; Name=11" evidence="5">
    <location>
        <begin position="499"/>
        <end position="518"/>
    </location>
</feature>
<feature type="transmembrane region" description="Helical; Name=12" evidence="5">
    <location>
        <begin position="538"/>
        <end position="556"/>
    </location>
</feature>
<feature type="topological domain" description="Cytoplasmic" evidence="5">
    <location>
        <begin position="557"/>
        <end position="614"/>
    </location>
</feature>
<feature type="region of interest" description="Disordered" evidence="6">
    <location>
        <begin position="576"/>
        <end position="614"/>
    </location>
</feature>
<feature type="glycosylation site" description="N-linked (GlcNAc...) asparagine" evidence="5">
    <location>
        <position position="171"/>
    </location>
</feature>
<feature type="glycosylation site" description="N-linked (GlcNAc...) asparagine" evidence="5">
    <location>
        <position position="183"/>
    </location>
</feature>
<feature type="disulfide bond" evidence="4">
    <location>
        <begin position="157"/>
        <end position="166"/>
    </location>
</feature>
<feature type="sequence variant" id="VAR_058704" description="In dbSNP:rs557881." evidence="7 8 9">
    <original>C</original>
    <variation>R</variation>
    <location>
        <position position="10"/>
    </location>
</feature>
<feature type="sequence conflict" description="In Ref. 2; AAA66574." evidence="11" ref="2">
    <original>C</original>
    <variation>Y</variation>
    <location>
        <position position="10"/>
    </location>
</feature>
<feature type="sequence conflict" description="In Ref. 1; AAA87029." evidence="11" ref="1">
    <original>QL</original>
    <variation>HV</variation>
    <location>
        <begin position="571"/>
        <end position="572"/>
    </location>
</feature>
<feature type="sequence conflict" description="In Ref. 3; BAG36439." evidence="11" ref="3">
    <original>D</original>
    <variation>N</variation>
    <location>
        <position position="576"/>
    </location>
</feature>
<accession>P48065</accession>
<accession>A0AV52</accession>
<accession>B2R992</accession>
<accession>D3DUN8</accession>
<name>S6A12_HUMAN</name>
<evidence type="ECO:0000250" key="1"/>
<evidence type="ECO:0000250" key="2">
    <source>
        <dbReference type="UniProtKB" id="P27799"/>
    </source>
</evidence>
<evidence type="ECO:0000250" key="3">
    <source>
        <dbReference type="UniProtKB" id="P31651"/>
    </source>
</evidence>
<evidence type="ECO:0000250" key="4">
    <source>
        <dbReference type="UniProtKB" id="Q7K4Y6"/>
    </source>
</evidence>
<evidence type="ECO:0000255" key="5"/>
<evidence type="ECO:0000256" key="6">
    <source>
        <dbReference type="SAM" id="MobiDB-lite"/>
    </source>
</evidence>
<evidence type="ECO:0000269" key="7">
    <source>
    </source>
</evidence>
<evidence type="ECO:0000269" key="8">
    <source>
    </source>
</evidence>
<evidence type="ECO:0000269" key="9">
    <source>
    </source>
</evidence>
<evidence type="ECO:0000303" key="10">
    <source>
    </source>
</evidence>
<evidence type="ECO:0000305" key="11"/>
<evidence type="ECO:0000305" key="12">
    <source>
    </source>
</evidence>
<evidence type="ECO:0000312" key="13">
    <source>
        <dbReference type="HGNC" id="HGNC:11045"/>
    </source>
</evidence>
<dbReference type="EMBL" id="U27699">
    <property type="protein sequence ID" value="AAA87029.1"/>
    <property type="molecule type" value="mRNA"/>
</dbReference>
<dbReference type="EMBL" id="L42300">
    <property type="protein sequence ID" value="AAA66574.1"/>
    <property type="molecule type" value="mRNA"/>
</dbReference>
<dbReference type="EMBL" id="AK313690">
    <property type="protein sequence ID" value="BAG36439.1"/>
    <property type="molecule type" value="mRNA"/>
</dbReference>
<dbReference type="EMBL" id="AC007406">
    <property type="status" value="NOT_ANNOTATED_CDS"/>
    <property type="molecule type" value="mRNA"/>
</dbReference>
<dbReference type="EMBL" id="CH471116">
    <property type="protein sequence ID" value="EAW88975.1"/>
    <property type="molecule type" value="Genomic_DNA"/>
</dbReference>
<dbReference type="EMBL" id="CH471116">
    <property type="protein sequence ID" value="EAW88976.1"/>
    <property type="molecule type" value="Genomic_DNA"/>
</dbReference>
<dbReference type="EMBL" id="CH471116">
    <property type="protein sequence ID" value="EAW88977.1"/>
    <property type="molecule type" value="Genomic_DNA"/>
</dbReference>
<dbReference type="EMBL" id="CH471116">
    <property type="protein sequence ID" value="EAW88978.1"/>
    <property type="molecule type" value="Genomic_DNA"/>
</dbReference>
<dbReference type="EMBL" id="BC126215">
    <property type="protein sequence ID" value="AAI26216.1"/>
    <property type="molecule type" value="mRNA"/>
</dbReference>
<dbReference type="EMBL" id="BC126217">
    <property type="protein sequence ID" value="AAI26218.1"/>
    <property type="molecule type" value="mRNA"/>
</dbReference>
<dbReference type="CCDS" id="CCDS8501.1"/>
<dbReference type="PIR" id="S68236">
    <property type="entry name" value="S68236"/>
</dbReference>
<dbReference type="RefSeq" id="NP_001116319.1">
    <property type="nucleotide sequence ID" value="NM_001122847.3"/>
</dbReference>
<dbReference type="RefSeq" id="NP_001116320.1">
    <property type="nucleotide sequence ID" value="NM_001122848.3"/>
</dbReference>
<dbReference type="RefSeq" id="NP_001193860.1">
    <property type="nucleotide sequence ID" value="NM_001206931.2"/>
</dbReference>
<dbReference type="RefSeq" id="NP_003035.3">
    <property type="nucleotide sequence ID" value="NM_003044.4"/>
</dbReference>
<dbReference type="RefSeq" id="XP_011519312.1">
    <property type="nucleotide sequence ID" value="XM_011521010.2"/>
</dbReference>
<dbReference type="SMR" id="P48065"/>
<dbReference type="BioGRID" id="112430">
    <property type="interactions" value="3"/>
</dbReference>
<dbReference type="FunCoup" id="P48065">
    <property type="interactions" value="222"/>
</dbReference>
<dbReference type="IntAct" id="P48065">
    <property type="interactions" value="3"/>
</dbReference>
<dbReference type="MINT" id="P48065"/>
<dbReference type="STRING" id="9606.ENSP00000399136"/>
<dbReference type="BindingDB" id="P48065"/>
<dbReference type="ChEMBL" id="CHEMBL3715"/>
<dbReference type="DrugBank" id="DB06756">
    <property type="generic name" value="Betaine"/>
</dbReference>
<dbReference type="DrugBank" id="DB08848">
    <property type="generic name" value="Guvacine"/>
</dbReference>
<dbReference type="DrugCentral" id="P48065"/>
<dbReference type="GuidetoPHARMACOLOGY" id="932"/>
<dbReference type="TCDB" id="2.A.22.3.1">
    <property type="family name" value="the neurotransmitter:sodium symporter (nss) family"/>
</dbReference>
<dbReference type="GlyCosmos" id="P48065">
    <property type="glycosylation" value="2 sites, No reported glycans"/>
</dbReference>
<dbReference type="GlyGen" id="P48065">
    <property type="glycosylation" value="2 sites"/>
</dbReference>
<dbReference type="iPTMnet" id="P48065"/>
<dbReference type="PhosphoSitePlus" id="P48065"/>
<dbReference type="BioMuta" id="SLC6A12"/>
<dbReference type="DMDM" id="257050987"/>
<dbReference type="jPOST" id="P48065"/>
<dbReference type="MassIVE" id="P48065"/>
<dbReference type="PaxDb" id="9606-ENSP00000399136"/>
<dbReference type="PeptideAtlas" id="P48065"/>
<dbReference type="ProteomicsDB" id="55859"/>
<dbReference type="Antibodypedia" id="22038">
    <property type="antibodies" value="153 antibodies from 29 providers"/>
</dbReference>
<dbReference type="DNASU" id="6539"/>
<dbReference type="Ensembl" id="ENST00000359674.8">
    <property type="protein sequence ID" value="ENSP00000352702.4"/>
    <property type="gene ID" value="ENSG00000111181.13"/>
</dbReference>
<dbReference type="Ensembl" id="ENST00000397296.6">
    <property type="protein sequence ID" value="ENSP00000380464.2"/>
    <property type="gene ID" value="ENSG00000111181.13"/>
</dbReference>
<dbReference type="Ensembl" id="ENST00000424061.6">
    <property type="protein sequence ID" value="ENSP00000399136.2"/>
    <property type="gene ID" value="ENSG00000111181.13"/>
</dbReference>
<dbReference type="Ensembl" id="ENST00000536824.5">
    <property type="protein sequence ID" value="ENSP00000444268.1"/>
    <property type="gene ID" value="ENSG00000111181.13"/>
</dbReference>
<dbReference type="Ensembl" id="ENST00000684302.1">
    <property type="protein sequence ID" value="ENSP00000508194.1"/>
    <property type="gene ID" value="ENSG00000111181.13"/>
</dbReference>
<dbReference type="GeneID" id="6539"/>
<dbReference type="KEGG" id="hsa:6539"/>
<dbReference type="MANE-Select" id="ENST00000684302.1">
    <property type="protein sequence ID" value="ENSP00000508194.1"/>
    <property type="RefSeq nucleotide sequence ID" value="NM_001122848.3"/>
    <property type="RefSeq protein sequence ID" value="NP_001116320.1"/>
</dbReference>
<dbReference type="UCSC" id="uc001qhz.4">
    <property type="organism name" value="human"/>
</dbReference>
<dbReference type="AGR" id="HGNC:11045"/>
<dbReference type="CTD" id="6539"/>
<dbReference type="DisGeNET" id="6539"/>
<dbReference type="GeneCards" id="SLC6A12"/>
<dbReference type="HGNC" id="HGNC:11045">
    <property type="gene designation" value="SLC6A12"/>
</dbReference>
<dbReference type="HPA" id="ENSG00000111181">
    <property type="expression patterns" value="Group enriched (brain, kidney, liver)"/>
</dbReference>
<dbReference type="MIM" id="603080">
    <property type="type" value="gene"/>
</dbReference>
<dbReference type="neXtProt" id="NX_P48065"/>
<dbReference type="OpenTargets" id="ENSG00000111181"/>
<dbReference type="PharmGKB" id="PA35908"/>
<dbReference type="VEuPathDB" id="HostDB:ENSG00000111181"/>
<dbReference type="eggNOG" id="KOG3660">
    <property type="taxonomic scope" value="Eukaryota"/>
</dbReference>
<dbReference type="GeneTree" id="ENSGT00940000161075"/>
<dbReference type="HOGENOM" id="CLU_006855_9_5_1"/>
<dbReference type="InParanoid" id="P48065"/>
<dbReference type="OMA" id="EVVCIGW"/>
<dbReference type="OrthoDB" id="6581954at2759"/>
<dbReference type="PAN-GO" id="P48065">
    <property type="GO annotations" value="4 GO annotations based on evolutionary models"/>
</dbReference>
<dbReference type="PhylomeDB" id="P48065"/>
<dbReference type="TreeFam" id="TF343812"/>
<dbReference type="PathwayCommons" id="P48065"/>
<dbReference type="Reactome" id="R-HSA-352230">
    <property type="pathway name" value="Amino acid transport across the plasma membrane"/>
</dbReference>
<dbReference type="Reactome" id="R-HSA-442660">
    <property type="pathway name" value="Na+/Cl- dependent neurotransmitter transporters"/>
</dbReference>
<dbReference type="Reactome" id="R-HSA-71288">
    <property type="pathway name" value="Creatine metabolism"/>
</dbReference>
<dbReference type="Reactome" id="R-HSA-888593">
    <property type="pathway name" value="Reuptake of GABA"/>
</dbReference>
<dbReference type="SignaLink" id="P48065"/>
<dbReference type="SIGNOR" id="P48065"/>
<dbReference type="BioGRID-ORCS" id="6539">
    <property type="hits" value="19 hits in 1144 CRISPR screens"/>
</dbReference>
<dbReference type="ChiTaRS" id="SLC6A12">
    <property type="organism name" value="human"/>
</dbReference>
<dbReference type="GenomeRNAi" id="6539"/>
<dbReference type="Pharos" id="P48065">
    <property type="development level" value="Tchem"/>
</dbReference>
<dbReference type="PRO" id="PR:P48065"/>
<dbReference type="Proteomes" id="UP000005640">
    <property type="component" value="Chromosome 12"/>
</dbReference>
<dbReference type="RNAct" id="P48065">
    <property type="molecule type" value="protein"/>
</dbReference>
<dbReference type="Bgee" id="ENSG00000111181">
    <property type="expression patterns" value="Expressed in metanephros cortex and 108 other cell types or tissues"/>
</dbReference>
<dbReference type="ExpressionAtlas" id="P48065">
    <property type="expression patterns" value="baseline and differential"/>
</dbReference>
<dbReference type="GO" id="GO:0016323">
    <property type="term" value="C:basolateral plasma membrane"/>
    <property type="evidence" value="ECO:0000250"/>
    <property type="project" value="UniProtKB"/>
</dbReference>
<dbReference type="GO" id="GO:0042995">
    <property type="term" value="C:cell projection"/>
    <property type="evidence" value="ECO:0000318"/>
    <property type="project" value="GO_Central"/>
</dbReference>
<dbReference type="GO" id="GO:0016020">
    <property type="term" value="C:membrane"/>
    <property type="evidence" value="ECO:0000304"/>
    <property type="project" value="ProtInc"/>
</dbReference>
<dbReference type="GO" id="GO:0005886">
    <property type="term" value="C:plasma membrane"/>
    <property type="evidence" value="ECO:0000250"/>
    <property type="project" value="UniProtKB"/>
</dbReference>
<dbReference type="GO" id="GO:0098793">
    <property type="term" value="C:presynapse"/>
    <property type="evidence" value="ECO:0007669"/>
    <property type="project" value="GOC"/>
</dbReference>
<dbReference type="GO" id="GO:0015171">
    <property type="term" value="F:amino acid transmembrane transporter activity"/>
    <property type="evidence" value="ECO:0000304"/>
    <property type="project" value="Reactome"/>
</dbReference>
<dbReference type="GO" id="GO:0005332">
    <property type="term" value="F:gamma-aminobutyric acid:sodium:chloride symporter activity"/>
    <property type="evidence" value="ECO:0000314"/>
    <property type="project" value="UniProtKB"/>
</dbReference>
<dbReference type="GO" id="GO:0008028">
    <property type="term" value="F:monocarboxylic acid transmembrane transporter activity"/>
    <property type="evidence" value="ECO:0000314"/>
    <property type="project" value="ARUK-UCL"/>
</dbReference>
<dbReference type="GO" id="GO:0006865">
    <property type="term" value="P:amino acid transport"/>
    <property type="evidence" value="ECO:0000318"/>
    <property type="project" value="GO_Central"/>
</dbReference>
<dbReference type="GO" id="GO:0051936">
    <property type="term" value="P:gamma-aminobutyric acid reuptake"/>
    <property type="evidence" value="ECO:0000304"/>
    <property type="project" value="Reactome"/>
</dbReference>
<dbReference type="GO" id="GO:0015812">
    <property type="term" value="P:gamma-aminobutyric acid transport"/>
    <property type="evidence" value="ECO:0000314"/>
    <property type="project" value="UniProtKB"/>
</dbReference>
<dbReference type="GO" id="GO:0031460">
    <property type="term" value="P:glycine betaine transport"/>
    <property type="evidence" value="ECO:0000250"/>
    <property type="project" value="UniProtKB"/>
</dbReference>
<dbReference type="GO" id="GO:0015718">
    <property type="term" value="P:monocarboxylic acid transport"/>
    <property type="evidence" value="ECO:0000314"/>
    <property type="project" value="ARUK-UCL"/>
</dbReference>
<dbReference type="GO" id="GO:0035725">
    <property type="term" value="P:sodium ion transmembrane transport"/>
    <property type="evidence" value="ECO:0000318"/>
    <property type="project" value="GO_Central"/>
</dbReference>
<dbReference type="CDD" id="cd11511">
    <property type="entry name" value="SLC6sbd_BGT1"/>
    <property type="match status" value="1"/>
</dbReference>
<dbReference type="InterPro" id="IPR000175">
    <property type="entry name" value="Na/ntran_symport"/>
</dbReference>
<dbReference type="InterPro" id="IPR002983">
    <property type="entry name" value="Na/ntran_symport_betaine"/>
</dbReference>
<dbReference type="InterPro" id="IPR037272">
    <property type="entry name" value="SNS_sf"/>
</dbReference>
<dbReference type="PANTHER" id="PTHR11616:SF118">
    <property type="entry name" value="SODIUM- AND CHLORIDE-DEPENDENT BETAINE TRANSPORTER"/>
    <property type="match status" value="1"/>
</dbReference>
<dbReference type="PANTHER" id="PTHR11616">
    <property type="entry name" value="SODIUM/CHLORIDE DEPENDENT TRANSPORTER"/>
    <property type="match status" value="1"/>
</dbReference>
<dbReference type="Pfam" id="PF00209">
    <property type="entry name" value="SNF"/>
    <property type="match status" value="1"/>
</dbReference>
<dbReference type="PRINTS" id="PR01198">
    <property type="entry name" value="BETTRANSPORT"/>
</dbReference>
<dbReference type="PRINTS" id="PR00176">
    <property type="entry name" value="NANEUSMPORT"/>
</dbReference>
<dbReference type="SUPFAM" id="SSF161070">
    <property type="entry name" value="SNF-like"/>
    <property type="match status" value="1"/>
</dbReference>
<dbReference type="PROSITE" id="PS00610">
    <property type="entry name" value="NA_NEUROTRAN_SYMP_1"/>
    <property type="match status" value="1"/>
</dbReference>
<dbReference type="PROSITE" id="PS00754">
    <property type="entry name" value="NA_NEUROTRAN_SYMP_2"/>
    <property type="match status" value="1"/>
</dbReference>
<dbReference type="PROSITE" id="PS50267">
    <property type="entry name" value="NA_NEUROTRAN_SYMP_3"/>
    <property type="match status" value="1"/>
</dbReference>
<organism>
    <name type="scientific">Homo sapiens</name>
    <name type="common">Human</name>
    <dbReference type="NCBI Taxonomy" id="9606"/>
    <lineage>
        <taxon>Eukaryota</taxon>
        <taxon>Metazoa</taxon>
        <taxon>Chordata</taxon>
        <taxon>Craniata</taxon>
        <taxon>Vertebrata</taxon>
        <taxon>Euteleostomi</taxon>
        <taxon>Mammalia</taxon>
        <taxon>Eutheria</taxon>
        <taxon>Euarchontoglires</taxon>
        <taxon>Primates</taxon>
        <taxon>Haplorrhini</taxon>
        <taxon>Catarrhini</taxon>
        <taxon>Hominidae</taxon>
        <taxon>Homo</taxon>
    </lineage>
</organism>
<protein>
    <recommendedName>
        <fullName>Sodium- and chloride-dependent betaine transporter</fullName>
    </recommendedName>
    <alternativeName>
        <fullName evidence="10">BGT-1</fullName>
    </alternativeName>
    <alternativeName>
        <fullName>Na(+)/Cl(-) betaine/GABA transporter</fullName>
    </alternativeName>
    <alternativeName>
        <fullName>Solute carrier family 6 member 12</fullName>
    </alternativeName>
</protein>
<keyword id="KW-1003">Cell membrane</keyword>
<keyword id="KW-1015">Disulfide bond</keyword>
<keyword id="KW-0325">Glycoprotein</keyword>
<keyword id="KW-0472">Membrane</keyword>
<keyword id="KW-0532">Neurotransmitter transport</keyword>
<keyword id="KW-1267">Proteomics identification</keyword>
<keyword id="KW-1185">Reference proteome</keyword>
<keyword id="KW-0769">Symport</keyword>
<keyword id="KW-0812">Transmembrane</keyword>
<keyword id="KW-1133">Transmembrane helix</keyword>
<keyword id="KW-0813">Transport</keyword>
<reference key="1">
    <citation type="journal article" date="1995" name="FEBS Lett.">
        <title>Molecular cloning and functional characterization of a GABA/betaine transporter from human kidney.</title>
        <authorList>
            <person name="Rasola A."/>
            <person name="Galietta L.J.V."/>
            <person name="Barone V."/>
            <person name="Romeo G."/>
            <person name="Bagnasco S."/>
        </authorList>
    </citation>
    <scope>NUCLEOTIDE SEQUENCE [MRNA]</scope>
    <scope>VARIANT ARG-10</scope>
    <scope>FUNCTION</scope>
    <scope>TRANSPORTER ACTIVITY</scope>
    <scope>BIOPHYSICOCHEMICAL PROPERTIES</scope>
    <source>
        <tissue>Kidney</tissue>
    </source>
</reference>
<reference key="2">
    <citation type="journal article" date="1995" name="J. Neurochem.">
        <title>Cloning and expression of a betaine/GABA transporter from human brain.</title>
        <authorList>
            <person name="Borden L.A."/>
            <person name="Smith K.E."/>
            <person name="Gustafson E.L."/>
            <person name="Branchek T.A."/>
            <person name="Weinshank R.L."/>
        </authorList>
    </citation>
    <scope>NUCLEOTIDE SEQUENCE [MRNA]</scope>
    <source>
        <tissue>Corpus striatum</tissue>
    </source>
</reference>
<reference key="3">
    <citation type="journal article" date="2004" name="Nat. Genet.">
        <title>Complete sequencing and characterization of 21,243 full-length human cDNAs.</title>
        <authorList>
            <person name="Ota T."/>
            <person name="Suzuki Y."/>
            <person name="Nishikawa T."/>
            <person name="Otsuki T."/>
            <person name="Sugiyama T."/>
            <person name="Irie R."/>
            <person name="Wakamatsu A."/>
            <person name="Hayashi K."/>
            <person name="Sato H."/>
            <person name="Nagai K."/>
            <person name="Kimura K."/>
            <person name="Makita H."/>
            <person name="Sekine M."/>
            <person name="Obayashi M."/>
            <person name="Nishi T."/>
            <person name="Shibahara T."/>
            <person name="Tanaka T."/>
            <person name="Ishii S."/>
            <person name="Yamamoto J."/>
            <person name="Saito K."/>
            <person name="Kawai Y."/>
            <person name="Isono Y."/>
            <person name="Nakamura Y."/>
            <person name="Nagahari K."/>
            <person name="Murakami K."/>
            <person name="Yasuda T."/>
            <person name="Iwayanagi T."/>
            <person name="Wagatsuma M."/>
            <person name="Shiratori A."/>
            <person name="Sudo H."/>
            <person name="Hosoiri T."/>
            <person name="Kaku Y."/>
            <person name="Kodaira H."/>
            <person name="Kondo H."/>
            <person name="Sugawara M."/>
            <person name="Takahashi M."/>
            <person name="Kanda K."/>
            <person name="Yokoi T."/>
            <person name="Furuya T."/>
            <person name="Kikkawa E."/>
            <person name="Omura Y."/>
            <person name="Abe K."/>
            <person name="Kamihara K."/>
            <person name="Katsuta N."/>
            <person name="Sato K."/>
            <person name="Tanikawa M."/>
            <person name="Yamazaki M."/>
            <person name="Ninomiya K."/>
            <person name="Ishibashi T."/>
            <person name="Yamashita H."/>
            <person name="Murakawa K."/>
            <person name="Fujimori K."/>
            <person name="Tanai H."/>
            <person name="Kimata M."/>
            <person name="Watanabe M."/>
            <person name="Hiraoka S."/>
            <person name="Chiba Y."/>
            <person name="Ishida S."/>
            <person name="Ono Y."/>
            <person name="Takiguchi S."/>
            <person name="Watanabe S."/>
            <person name="Yosida M."/>
            <person name="Hotuta T."/>
            <person name="Kusano J."/>
            <person name="Kanehori K."/>
            <person name="Takahashi-Fujii A."/>
            <person name="Hara H."/>
            <person name="Tanase T.-O."/>
            <person name="Nomura Y."/>
            <person name="Togiya S."/>
            <person name="Komai F."/>
            <person name="Hara R."/>
            <person name="Takeuchi K."/>
            <person name="Arita M."/>
            <person name="Imose N."/>
            <person name="Musashino K."/>
            <person name="Yuuki H."/>
            <person name="Oshima A."/>
            <person name="Sasaki N."/>
            <person name="Aotsuka S."/>
            <person name="Yoshikawa Y."/>
            <person name="Matsunawa H."/>
            <person name="Ichihara T."/>
            <person name="Shiohata N."/>
            <person name="Sano S."/>
            <person name="Moriya S."/>
            <person name="Momiyama H."/>
            <person name="Satoh N."/>
            <person name="Takami S."/>
            <person name="Terashima Y."/>
            <person name="Suzuki O."/>
            <person name="Nakagawa S."/>
            <person name="Senoh A."/>
            <person name="Mizoguchi H."/>
            <person name="Goto Y."/>
            <person name="Shimizu F."/>
            <person name="Wakebe H."/>
            <person name="Hishigaki H."/>
            <person name="Watanabe T."/>
            <person name="Sugiyama A."/>
            <person name="Takemoto M."/>
            <person name="Kawakami B."/>
            <person name="Yamazaki M."/>
            <person name="Watanabe K."/>
            <person name="Kumagai A."/>
            <person name="Itakura S."/>
            <person name="Fukuzumi Y."/>
            <person name="Fujimori Y."/>
            <person name="Komiyama M."/>
            <person name="Tashiro H."/>
            <person name="Tanigami A."/>
            <person name="Fujiwara T."/>
            <person name="Ono T."/>
            <person name="Yamada K."/>
            <person name="Fujii Y."/>
            <person name="Ozaki K."/>
            <person name="Hirao M."/>
            <person name="Ohmori Y."/>
            <person name="Kawabata A."/>
            <person name="Hikiji T."/>
            <person name="Kobatake N."/>
            <person name="Inagaki H."/>
            <person name="Ikema Y."/>
            <person name="Okamoto S."/>
            <person name="Okitani R."/>
            <person name="Kawakami T."/>
            <person name="Noguchi S."/>
            <person name="Itoh T."/>
            <person name="Shigeta K."/>
            <person name="Senba T."/>
            <person name="Matsumura K."/>
            <person name="Nakajima Y."/>
            <person name="Mizuno T."/>
            <person name="Morinaga M."/>
            <person name="Sasaki M."/>
            <person name="Togashi T."/>
            <person name="Oyama M."/>
            <person name="Hata H."/>
            <person name="Watanabe M."/>
            <person name="Komatsu T."/>
            <person name="Mizushima-Sugano J."/>
            <person name="Satoh T."/>
            <person name="Shirai Y."/>
            <person name="Takahashi Y."/>
            <person name="Nakagawa K."/>
            <person name="Okumura K."/>
            <person name="Nagase T."/>
            <person name="Nomura N."/>
            <person name="Kikuchi H."/>
            <person name="Masuho Y."/>
            <person name="Yamashita R."/>
            <person name="Nakai K."/>
            <person name="Yada T."/>
            <person name="Nakamura Y."/>
            <person name="Ohara O."/>
            <person name="Isogai T."/>
            <person name="Sugano S."/>
        </authorList>
    </citation>
    <scope>NUCLEOTIDE SEQUENCE [LARGE SCALE MRNA]</scope>
    <scope>VARIANT ARG-10</scope>
    <source>
        <tissue>Fetal brain</tissue>
    </source>
</reference>
<reference key="4">
    <citation type="journal article" date="2006" name="Nature">
        <title>The finished DNA sequence of human chromosome 12.</title>
        <authorList>
            <person name="Scherer S.E."/>
            <person name="Muzny D.M."/>
            <person name="Buhay C.J."/>
            <person name="Chen R."/>
            <person name="Cree A."/>
            <person name="Ding Y."/>
            <person name="Dugan-Rocha S."/>
            <person name="Gill R."/>
            <person name="Gunaratne P."/>
            <person name="Harris R.A."/>
            <person name="Hawes A.C."/>
            <person name="Hernandez J."/>
            <person name="Hodgson A.V."/>
            <person name="Hume J."/>
            <person name="Jackson A."/>
            <person name="Khan Z.M."/>
            <person name="Kovar-Smith C."/>
            <person name="Lewis L.R."/>
            <person name="Lozado R.J."/>
            <person name="Metzker M.L."/>
            <person name="Milosavljevic A."/>
            <person name="Miner G.R."/>
            <person name="Montgomery K.T."/>
            <person name="Morgan M.B."/>
            <person name="Nazareth L.V."/>
            <person name="Scott G."/>
            <person name="Sodergren E."/>
            <person name="Song X.-Z."/>
            <person name="Steffen D."/>
            <person name="Lovering R.C."/>
            <person name="Wheeler D.A."/>
            <person name="Worley K.C."/>
            <person name="Yuan Y."/>
            <person name="Zhang Z."/>
            <person name="Adams C.Q."/>
            <person name="Ansari-Lari M.A."/>
            <person name="Ayele M."/>
            <person name="Brown M.J."/>
            <person name="Chen G."/>
            <person name="Chen Z."/>
            <person name="Clerc-Blankenburg K.P."/>
            <person name="Davis C."/>
            <person name="Delgado O."/>
            <person name="Dinh H.H."/>
            <person name="Draper H."/>
            <person name="Gonzalez-Garay M.L."/>
            <person name="Havlak P."/>
            <person name="Jackson L.R."/>
            <person name="Jacob L.S."/>
            <person name="Kelly S.H."/>
            <person name="Li L."/>
            <person name="Li Z."/>
            <person name="Liu J."/>
            <person name="Liu W."/>
            <person name="Lu J."/>
            <person name="Maheshwari M."/>
            <person name="Nguyen B.-V."/>
            <person name="Okwuonu G.O."/>
            <person name="Pasternak S."/>
            <person name="Perez L.M."/>
            <person name="Plopper F.J.H."/>
            <person name="Santibanez J."/>
            <person name="Shen H."/>
            <person name="Tabor P.E."/>
            <person name="Verduzco D."/>
            <person name="Waldron L."/>
            <person name="Wang Q."/>
            <person name="Williams G.A."/>
            <person name="Zhang J."/>
            <person name="Zhou J."/>
            <person name="Allen C.C."/>
            <person name="Amin A.G."/>
            <person name="Anyalebechi V."/>
            <person name="Bailey M."/>
            <person name="Barbaria J.A."/>
            <person name="Bimage K.E."/>
            <person name="Bryant N.P."/>
            <person name="Burch P.E."/>
            <person name="Burkett C.E."/>
            <person name="Burrell K.L."/>
            <person name="Calderon E."/>
            <person name="Cardenas V."/>
            <person name="Carter K."/>
            <person name="Casias K."/>
            <person name="Cavazos I."/>
            <person name="Cavazos S.R."/>
            <person name="Ceasar H."/>
            <person name="Chacko J."/>
            <person name="Chan S.N."/>
            <person name="Chavez D."/>
            <person name="Christopoulos C."/>
            <person name="Chu J."/>
            <person name="Cockrell R."/>
            <person name="Cox C.D."/>
            <person name="Dang M."/>
            <person name="Dathorne S.R."/>
            <person name="David R."/>
            <person name="Davis C.M."/>
            <person name="Davy-Carroll L."/>
            <person name="Deshazo D.R."/>
            <person name="Donlin J.E."/>
            <person name="D'Souza L."/>
            <person name="Eaves K.A."/>
            <person name="Egan A."/>
            <person name="Emery-Cohen A.J."/>
            <person name="Escotto M."/>
            <person name="Flagg N."/>
            <person name="Forbes L.D."/>
            <person name="Gabisi A.M."/>
            <person name="Garza M."/>
            <person name="Hamilton C."/>
            <person name="Henderson N."/>
            <person name="Hernandez O."/>
            <person name="Hines S."/>
            <person name="Hogues M.E."/>
            <person name="Huang M."/>
            <person name="Idlebird D.G."/>
            <person name="Johnson R."/>
            <person name="Jolivet A."/>
            <person name="Jones S."/>
            <person name="Kagan R."/>
            <person name="King L.M."/>
            <person name="Leal B."/>
            <person name="Lebow H."/>
            <person name="Lee S."/>
            <person name="LeVan J.M."/>
            <person name="Lewis L.C."/>
            <person name="London P."/>
            <person name="Lorensuhewa L.M."/>
            <person name="Loulseged H."/>
            <person name="Lovett D.A."/>
            <person name="Lucier A."/>
            <person name="Lucier R.L."/>
            <person name="Ma J."/>
            <person name="Madu R.C."/>
            <person name="Mapua P."/>
            <person name="Martindale A.D."/>
            <person name="Martinez E."/>
            <person name="Massey E."/>
            <person name="Mawhiney S."/>
            <person name="Meador M.G."/>
            <person name="Mendez S."/>
            <person name="Mercado C."/>
            <person name="Mercado I.C."/>
            <person name="Merritt C.E."/>
            <person name="Miner Z.L."/>
            <person name="Minja E."/>
            <person name="Mitchell T."/>
            <person name="Mohabbat F."/>
            <person name="Mohabbat K."/>
            <person name="Montgomery B."/>
            <person name="Moore N."/>
            <person name="Morris S."/>
            <person name="Munidasa M."/>
            <person name="Ngo R.N."/>
            <person name="Nguyen N.B."/>
            <person name="Nickerson E."/>
            <person name="Nwaokelemeh O.O."/>
            <person name="Nwokenkwo S."/>
            <person name="Obregon M."/>
            <person name="Oguh M."/>
            <person name="Oragunye N."/>
            <person name="Oviedo R.J."/>
            <person name="Parish B.J."/>
            <person name="Parker D.N."/>
            <person name="Parrish J."/>
            <person name="Parks K.L."/>
            <person name="Paul H.A."/>
            <person name="Payton B.A."/>
            <person name="Perez A."/>
            <person name="Perrin W."/>
            <person name="Pickens A."/>
            <person name="Primus E.L."/>
            <person name="Pu L.-L."/>
            <person name="Puazo M."/>
            <person name="Quiles M.M."/>
            <person name="Quiroz J.B."/>
            <person name="Rabata D."/>
            <person name="Reeves K."/>
            <person name="Ruiz S.J."/>
            <person name="Shao H."/>
            <person name="Sisson I."/>
            <person name="Sonaike T."/>
            <person name="Sorelle R.P."/>
            <person name="Sutton A.E."/>
            <person name="Svatek A.F."/>
            <person name="Svetz L.A."/>
            <person name="Tamerisa K.S."/>
            <person name="Taylor T.R."/>
            <person name="Teague B."/>
            <person name="Thomas N."/>
            <person name="Thorn R.D."/>
            <person name="Trejos Z.Y."/>
            <person name="Trevino B.K."/>
            <person name="Ukegbu O.N."/>
            <person name="Urban J.B."/>
            <person name="Vasquez L.I."/>
            <person name="Vera V.A."/>
            <person name="Villasana D.M."/>
            <person name="Wang L."/>
            <person name="Ward-Moore S."/>
            <person name="Warren J.T."/>
            <person name="Wei X."/>
            <person name="White F."/>
            <person name="Williamson A.L."/>
            <person name="Wleczyk R."/>
            <person name="Wooden H.S."/>
            <person name="Wooden S.H."/>
            <person name="Yen J."/>
            <person name="Yoon L."/>
            <person name="Yoon V."/>
            <person name="Zorrilla S.E."/>
            <person name="Nelson D."/>
            <person name="Kucherlapati R."/>
            <person name="Weinstock G."/>
            <person name="Gibbs R.A."/>
        </authorList>
    </citation>
    <scope>NUCLEOTIDE SEQUENCE [LARGE SCALE GENOMIC DNA]</scope>
    <source>
        <tissue>Corpus striatum</tissue>
    </source>
</reference>
<reference key="5">
    <citation type="submission" date="2005-09" db="EMBL/GenBank/DDBJ databases">
        <authorList>
            <person name="Mural R.J."/>
            <person name="Istrail S."/>
            <person name="Sutton G.G."/>
            <person name="Florea L."/>
            <person name="Halpern A.L."/>
            <person name="Mobarry C.M."/>
            <person name="Lippert R."/>
            <person name="Walenz B."/>
            <person name="Shatkay H."/>
            <person name="Dew I."/>
            <person name="Miller J.R."/>
            <person name="Flanigan M.J."/>
            <person name="Edwards N.J."/>
            <person name="Bolanos R."/>
            <person name="Fasulo D."/>
            <person name="Halldorsson B.V."/>
            <person name="Hannenhalli S."/>
            <person name="Turner R."/>
            <person name="Yooseph S."/>
            <person name="Lu F."/>
            <person name="Nusskern D.R."/>
            <person name="Shue B.C."/>
            <person name="Zheng X.H."/>
            <person name="Zhong F."/>
            <person name="Delcher A.L."/>
            <person name="Huson D.H."/>
            <person name="Kravitz S.A."/>
            <person name="Mouchard L."/>
            <person name="Reinert K."/>
            <person name="Remington K.A."/>
            <person name="Clark A.G."/>
            <person name="Waterman M.S."/>
            <person name="Eichler E.E."/>
            <person name="Adams M.D."/>
            <person name="Hunkapiller M.W."/>
            <person name="Myers E.W."/>
            <person name="Venter J.C."/>
        </authorList>
    </citation>
    <scope>NUCLEOTIDE SEQUENCE [LARGE SCALE GENOMIC DNA]</scope>
</reference>
<reference key="6">
    <citation type="journal article" date="2004" name="Genome Res.">
        <title>The status, quality, and expansion of the NIH full-length cDNA project: the Mammalian Gene Collection (MGC).</title>
        <authorList>
            <consortium name="The MGC Project Team"/>
        </authorList>
    </citation>
    <scope>NUCLEOTIDE SEQUENCE [LARGE SCALE MRNA]</scope>
    <scope>VARIANT ARG-10</scope>
    <source>
        <tissue>Cerebellum</tissue>
    </source>
</reference>
<sequence length="614" mass="69368">MDGKVAVQECGPPAVSWVPEEGEKLDQEDEDQVKDRGQWTNKMEFVLSVAGEIIGLGNVWRFPYLCYKNGGGAFFIPYFIFFFVCGIPVFFLEVALGQYTSQGSVTAWRKICPLFQGIGLASVVIESYLNVYYIIILAWALFYLFSSFTSELPWTTCNNFWNTEHCTDFLNHSGAGTVTPFENFTSPVMEFWERRVLGITSGIHDLGSLRWELALCLLLAWVICYFCIWKGVKSTGKVVYFTATFPYLMLVILLIRGVTLPGAYQGIIYYLKPDLFRLKDPQVWMDAGTQIFFSFAICQGCLTALGSYNKYHNNCYKDCIALCFLNSATSFVAGFVVFSILGFMSQEQGVPISEVAESGPGLAFIAFPKAVTMMPLSQLWSCLFFIMLIFLGLDSQFVCVECLVTASIDMFPRQLRKSGRRELLILTIAVMCYLIGLFLVTEGGMYIFQLFDYYASSGICLLFLSLFEVVCISWVYGADRFYDNIEDMIGYRPWPLVKISWLFLTPGLCLATFLFSLSKYTPLKYNNVYVYPPWGYSIGWFLALSSMVCVPLFVVITLLKTRGPFRKRLRQLITPDSSLPQPKQHPCLDGSAGRNFGPSPTREGLIAGEKETHL</sequence>